<name>FMT_BACAH</name>
<feature type="chain" id="PRO_1000020018" description="Methionyl-tRNA formyltransferase">
    <location>
        <begin position="1"/>
        <end position="314"/>
    </location>
</feature>
<feature type="binding site" evidence="1">
    <location>
        <begin position="110"/>
        <end position="113"/>
    </location>
    <ligand>
        <name>(6S)-5,6,7,8-tetrahydrofolate</name>
        <dbReference type="ChEBI" id="CHEBI:57453"/>
    </ligand>
</feature>
<organism>
    <name type="scientific">Bacillus thuringiensis (strain Al Hakam)</name>
    <dbReference type="NCBI Taxonomy" id="412694"/>
    <lineage>
        <taxon>Bacteria</taxon>
        <taxon>Bacillati</taxon>
        <taxon>Bacillota</taxon>
        <taxon>Bacilli</taxon>
        <taxon>Bacillales</taxon>
        <taxon>Bacillaceae</taxon>
        <taxon>Bacillus</taxon>
        <taxon>Bacillus cereus group</taxon>
    </lineage>
</organism>
<gene>
    <name evidence="1" type="primary">fmt</name>
    <name type="ordered locus">BALH_3497</name>
</gene>
<dbReference type="EC" id="2.1.2.9" evidence="1"/>
<dbReference type="EMBL" id="CP000485">
    <property type="protein sequence ID" value="ABK86732.1"/>
    <property type="molecule type" value="Genomic_DNA"/>
</dbReference>
<dbReference type="RefSeq" id="WP_000598790.1">
    <property type="nucleotide sequence ID" value="NC_008600.1"/>
</dbReference>
<dbReference type="SMR" id="A0RHN9"/>
<dbReference type="GeneID" id="45023695"/>
<dbReference type="KEGG" id="btl:BALH_3497"/>
<dbReference type="HOGENOM" id="CLU_033347_1_1_9"/>
<dbReference type="GO" id="GO:0005829">
    <property type="term" value="C:cytosol"/>
    <property type="evidence" value="ECO:0007669"/>
    <property type="project" value="TreeGrafter"/>
</dbReference>
<dbReference type="GO" id="GO:0004479">
    <property type="term" value="F:methionyl-tRNA formyltransferase activity"/>
    <property type="evidence" value="ECO:0007669"/>
    <property type="project" value="UniProtKB-UniRule"/>
</dbReference>
<dbReference type="CDD" id="cd08646">
    <property type="entry name" value="FMT_core_Met-tRNA-FMT_N"/>
    <property type="match status" value="1"/>
</dbReference>
<dbReference type="CDD" id="cd08704">
    <property type="entry name" value="Met_tRNA_FMT_C"/>
    <property type="match status" value="1"/>
</dbReference>
<dbReference type="FunFam" id="3.10.25.10:FF:000003">
    <property type="entry name" value="Methionyl-tRNA formyltransferase"/>
    <property type="match status" value="1"/>
</dbReference>
<dbReference type="FunFam" id="3.40.50.170:FF:000004">
    <property type="entry name" value="Methionyl-tRNA formyltransferase"/>
    <property type="match status" value="1"/>
</dbReference>
<dbReference type="Gene3D" id="3.10.25.10">
    <property type="entry name" value="Formyl transferase, C-terminal domain"/>
    <property type="match status" value="1"/>
</dbReference>
<dbReference type="Gene3D" id="3.40.50.170">
    <property type="entry name" value="Formyl transferase, N-terminal domain"/>
    <property type="match status" value="1"/>
</dbReference>
<dbReference type="HAMAP" id="MF_00182">
    <property type="entry name" value="Formyl_trans"/>
    <property type="match status" value="1"/>
</dbReference>
<dbReference type="InterPro" id="IPR005794">
    <property type="entry name" value="Fmt"/>
</dbReference>
<dbReference type="InterPro" id="IPR005793">
    <property type="entry name" value="Formyl_trans_C"/>
</dbReference>
<dbReference type="InterPro" id="IPR037022">
    <property type="entry name" value="Formyl_trans_C_sf"/>
</dbReference>
<dbReference type="InterPro" id="IPR002376">
    <property type="entry name" value="Formyl_transf_N"/>
</dbReference>
<dbReference type="InterPro" id="IPR036477">
    <property type="entry name" value="Formyl_transf_N_sf"/>
</dbReference>
<dbReference type="InterPro" id="IPR011034">
    <property type="entry name" value="Formyl_transferase-like_C_sf"/>
</dbReference>
<dbReference type="InterPro" id="IPR001555">
    <property type="entry name" value="GART_AS"/>
</dbReference>
<dbReference type="InterPro" id="IPR044135">
    <property type="entry name" value="Met-tRNA-FMT_C"/>
</dbReference>
<dbReference type="InterPro" id="IPR041711">
    <property type="entry name" value="Met-tRNA-FMT_N"/>
</dbReference>
<dbReference type="NCBIfam" id="TIGR00460">
    <property type="entry name" value="fmt"/>
    <property type="match status" value="1"/>
</dbReference>
<dbReference type="PANTHER" id="PTHR11138">
    <property type="entry name" value="METHIONYL-TRNA FORMYLTRANSFERASE"/>
    <property type="match status" value="1"/>
</dbReference>
<dbReference type="PANTHER" id="PTHR11138:SF5">
    <property type="entry name" value="METHIONYL-TRNA FORMYLTRANSFERASE, MITOCHONDRIAL"/>
    <property type="match status" value="1"/>
</dbReference>
<dbReference type="Pfam" id="PF02911">
    <property type="entry name" value="Formyl_trans_C"/>
    <property type="match status" value="1"/>
</dbReference>
<dbReference type="Pfam" id="PF00551">
    <property type="entry name" value="Formyl_trans_N"/>
    <property type="match status" value="1"/>
</dbReference>
<dbReference type="SUPFAM" id="SSF50486">
    <property type="entry name" value="FMT C-terminal domain-like"/>
    <property type="match status" value="1"/>
</dbReference>
<dbReference type="SUPFAM" id="SSF53328">
    <property type="entry name" value="Formyltransferase"/>
    <property type="match status" value="1"/>
</dbReference>
<dbReference type="PROSITE" id="PS00373">
    <property type="entry name" value="GART"/>
    <property type="match status" value="1"/>
</dbReference>
<accession>A0RHN9</accession>
<comment type="function">
    <text evidence="1">Attaches a formyl group to the free amino group of methionyl-tRNA(fMet). The formyl group appears to play a dual role in the initiator identity of N-formylmethionyl-tRNA by promoting its recognition by IF2 and preventing the misappropriation of this tRNA by the elongation apparatus.</text>
</comment>
<comment type="catalytic activity">
    <reaction evidence="1">
        <text>L-methionyl-tRNA(fMet) + (6R)-10-formyltetrahydrofolate = N-formyl-L-methionyl-tRNA(fMet) + (6S)-5,6,7,8-tetrahydrofolate + H(+)</text>
        <dbReference type="Rhea" id="RHEA:24380"/>
        <dbReference type="Rhea" id="RHEA-COMP:9952"/>
        <dbReference type="Rhea" id="RHEA-COMP:9953"/>
        <dbReference type="ChEBI" id="CHEBI:15378"/>
        <dbReference type="ChEBI" id="CHEBI:57453"/>
        <dbReference type="ChEBI" id="CHEBI:78530"/>
        <dbReference type="ChEBI" id="CHEBI:78844"/>
        <dbReference type="ChEBI" id="CHEBI:195366"/>
        <dbReference type="EC" id="2.1.2.9"/>
    </reaction>
</comment>
<comment type="similarity">
    <text evidence="1">Belongs to the Fmt family.</text>
</comment>
<keyword id="KW-0648">Protein biosynthesis</keyword>
<keyword id="KW-0808">Transferase</keyword>
<sequence>MIKVVFMGTPDFSVPVLRRLIEDGYDVIGVVTQPDRPVGRKKVLTPTPVKVEAEKHGIPVLQPLRIREKDEYEKVLALEPDLIVTAAFGQIVPNEILEAPKYGCINVHASLLPELRGGAPIHYAIMEGKEKTGITIMYMVEKLDAGDILTQVEVEIEERETTGSLFDKLSEAGAHLLSKTVPLLIQGKLEPIKQNEEEVTFAYNIKREQEKIDWTKTGEEVYNHIRGLNPWPVAYTTLAGQVVKVWWGEKVPVTKSAEAGTIVAIEEDGFVVATGNETGVKITELQPSGKKRMSCSQFLRGTKPEIGTKLGENA</sequence>
<reference key="1">
    <citation type="journal article" date="2007" name="J. Bacteriol.">
        <title>The complete genome sequence of Bacillus thuringiensis Al Hakam.</title>
        <authorList>
            <person name="Challacombe J.F."/>
            <person name="Altherr M.R."/>
            <person name="Xie G."/>
            <person name="Bhotika S.S."/>
            <person name="Brown N."/>
            <person name="Bruce D."/>
            <person name="Campbell C.S."/>
            <person name="Campbell M.L."/>
            <person name="Chen J."/>
            <person name="Chertkov O."/>
            <person name="Cleland C."/>
            <person name="Dimitrijevic M."/>
            <person name="Doggett N.A."/>
            <person name="Fawcett J.J."/>
            <person name="Glavina T."/>
            <person name="Goodwin L.A."/>
            <person name="Green L.D."/>
            <person name="Han C.S."/>
            <person name="Hill K.K."/>
            <person name="Hitchcock P."/>
            <person name="Jackson P.J."/>
            <person name="Keim P."/>
            <person name="Kewalramani A.R."/>
            <person name="Longmire J."/>
            <person name="Lucas S."/>
            <person name="Malfatti S."/>
            <person name="Martinez D."/>
            <person name="McMurry K."/>
            <person name="Meincke L.J."/>
            <person name="Misra M."/>
            <person name="Moseman B.L."/>
            <person name="Mundt M."/>
            <person name="Munk A.C."/>
            <person name="Okinaka R.T."/>
            <person name="Parson-Quintana B."/>
            <person name="Reilly L.P."/>
            <person name="Richardson P."/>
            <person name="Robinson D.L."/>
            <person name="Saunders E."/>
            <person name="Tapia R."/>
            <person name="Tesmer J.G."/>
            <person name="Thayer N."/>
            <person name="Thompson L.S."/>
            <person name="Tice H."/>
            <person name="Ticknor L.O."/>
            <person name="Wills P.L."/>
            <person name="Gilna P."/>
            <person name="Brettin T.S."/>
        </authorList>
    </citation>
    <scope>NUCLEOTIDE SEQUENCE [LARGE SCALE GENOMIC DNA]</scope>
    <source>
        <strain>Al Hakam</strain>
    </source>
</reference>
<evidence type="ECO:0000255" key="1">
    <source>
        <dbReference type="HAMAP-Rule" id="MF_00182"/>
    </source>
</evidence>
<proteinExistence type="inferred from homology"/>
<protein>
    <recommendedName>
        <fullName evidence="1">Methionyl-tRNA formyltransferase</fullName>
        <ecNumber evidence="1">2.1.2.9</ecNumber>
    </recommendedName>
</protein>